<organism>
    <name type="scientific">Endomicrobium trichonymphae</name>
    <dbReference type="NCBI Taxonomy" id="1408204"/>
    <lineage>
        <taxon>Bacteria</taxon>
        <taxon>Pseudomonadati</taxon>
        <taxon>Elusimicrobiota</taxon>
        <taxon>Endomicrobiia</taxon>
        <taxon>Endomicrobiales</taxon>
        <taxon>Endomicrobiaceae</taxon>
        <taxon>Candidatus Endomicrobiellum</taxon>
    </lineage>
</organism>
<gene>
    <name evidence="1" type="primary">rplV</name>
    <name type="ordered locus">TGRD_087</name>
</gene>
<keyword id="KW-0687">Ribonucleoprotein</keyword>
<keyword id="KW-0689">Ribosomal protein</keyword>
<keyword id="KW-0694">RNA-binding</keyword>
<keyword id="KW-0699">rRNA-binding</keyword>
<name>RL22_ENDTX</name>
<feature type="chain" id="PRO_0000354532" description="Large ribosomal subunit protein uL22">
    <location>
        <begin position="1"/>
        <end position="115"/>
    </location>
</feature>
<reference key="1">
    <citation type="journal article" date="2008" name="Proc. Natl. Acad. Sci. U.S.A.">
        <title>Complete genome of the uncultured termite group 1 bacteria in a single host protist cell.</title>
        <authorList>
            <person name="Hongoh Y."/>
            <person name="Sharma V.K."/>
            <person name="Prakash T."/>
            <person name="Noda S."/>
            <person name="Taylor T.D."/>
            <person name="Kudo T."/>
            <person name="Sakaki Y."/>
            <person name="Toyoda A."/>
            <person name="Hattori M."/>
            <person name="Ohkuma M."/>
        </authorList>
    </citation>
    <scope>NUCLEOTIDE SEQUENCE [LARGE SCALE GENOMIC DNA]</scope>
</reference>
<evidence type="ECO:0000255" key="1">
    <source>
        <dbReference type="HAMAP-Rule" id="MF_01331"/>
    </source>
</evidence>
<evidence type="ECO:0000305" key="2"/>
<comment type="function">
    <text evidence="1">This protein binds specifically to 23S rRNA; its binding is stimulated by other ribosomal proteins, e.g. L4, L17, and L20. It is important during the early stages of 50S assembly. It makes multiple contacts with different domains of the 23S rRNA in the assembled 50S subunit and ribosome (By similarity).</text>
</comment>
<comment type="function">
    <text evidence="1">The globular domain of the protein is located near the polypeptide exit tunnel on the outside of the subunit, while an extended beta-hairpin is found that lines the wall of the exit tunnel in the center of the 70S ribosome.</text>
</comment>
<comment type="subunit">
    <text evidence="1">Part of the 50S ribosomal subunit.</text>
</comment>
<comment type="similarity">
    <text evidence="1">Belongs to the universal ribosomal protein uL22 family.</text>
</comment>
<proteinExistence type="inferred from homology"/>
<accession>B1GZ88</accession>
<protein>
    <recommendedName>
        <fullName evidence="1">Large ribosomal subunit protein uL22</fullName>
    </recommendedName>
    <alternativeName>
        <fullName evidence="2">50S ribosomal protein L22</fullName>
    </alternativeName>
</protein>
<sequence>MEAKATAKFVRYTPRKVNQVLALIRNKKVEKTLEILSFLPKSTAVLVKKVLKSATANAGKFEDYSGLKVKEAWVGNGPILKRIRAGSKGRSMPIKKRTVHLTIIVTDASTYLRKK</sequence>
<dbReference type="EMBL" id="AP009510">
    <property type="protein sequence ID" value="BAG13570.1"/>
    <property type="molecule type" value="Genomic_DNA"/>
</dbReference>
<dbReference type="RefSeq" id="WP_015423099.1">
    <property type="nucleotide sequence ID" value="NC_020419.1"/>
</dbReference>
<dbReference type="SMR" id="B1GZ88"/>
<dbReference type="STRING" id="471821.TGRD_087"/>
<dbReference type="KEGG" id="eti:RSTT_072"/>
<dbReference type="KEGG" id="rsd:TGRD_087"/>
<dbReference type="HOGENOM" id="CLU_083987_3_3_0"/>
<dbReference type="OrthoDB" id="9805969at2"/>
<dbReference type="Proteomes" id="UP000001691">
    <property type="component" value="Chromosome"/>
</dbReference>
<dbReference type="GO" id="GO:0022625">
    <property type="term" value="C:cytosolic large ribosomal subunit"/>
    <property type="evidence" value="ECO:0007669"/>
    <property type="project" value="TreeGrafter"/>
</dbReference>
<dbReference type="GO" id="GO:0019843">
    <property type="term" value="F:rRNA binding"/>
    <property type="evidence" value="ECO:0007669"/>
    <property type="project" value="UniProtKB-UniRule"/>
</dbReference>
<dbReference type="GO" id="GO:0003735">
    <property type="term" value="F:structural constituent of ribosome"/>
    <property type="evidence" value="ECO:0007669"/>
    <property type="project" value="InterPro"/>
</dbReference>
<dbReference type="GO" id="GO:0006412">
    <property type="term" value="P:translation"/>
    <property type="evidence" value="ECO:0007669"/>
    <property type="project" value="UniProtKB-UniRule"/>
</dbReference>
<dbReference type="CDD" id="cd00336">
    <property type="entry name" value="Ribosomal_L22"/>
    <property type="match status" value="1"/>
</dbReference>
<dbReference type="Gene3D" id="3.90.470.10">
    <property type="entry name" value="Ribosomal protein L22/L17"/>
    <property type="match status" value="1"/>
</dbReference>
<dbReference type="HAMAP" id="MF_01331_B">
    <property type="entry name" value="Ribosomal_uL22_B"/>
    <property type="match status" value="1"/>
</dbReference>
<dbReference type="InterPro" id="IPR001063">
    <property type="entry name" value="Ribosomal_uL22"/>
</dbReference>
<dbReference type="InterPro" id="IPR005727">
    <property type="entry name" value="Ribosomal_uL22_bac/chlpt-type"/>
</dbReference>
<dbReference type="InterPro" id="IPR047867">
    <property type="entry name" value="Ribosomal_uL22_bac/org-type"/>
</dbReference>
<dbReference type="InterPro" id="IPR036394">
    <property type="entry name" value="Ribosomal_uL22_sf"/>
</dbReference>
<dbReference type="NCBIfam" id="TIGR01044">
    <property type="entry name" value="rplV_bact"/>
    <property type="match status" value="1"/>
</dbReference>
<dbReference type="PANTHER" id="PTHR13501">
    <property type="entry name" value="CHLOROPLAST 50S RIBOSOMAL PROTEIN L22-RELATED"/>
    <property type="match status" value="1"/>
</dbReference>
<dbReference type="PANTHER" id="PTHR13501:SF8">
    <property type="entry name" value="LARGE RIBOSOMAL SUBUNIT PROTEIN UL22M"/>
    <property type="match status" value="1"/>
</dbReference>
<dbReference type="Pfam" id="PF00237">
    <property type="entry name" value="Ribosomal_L22"/>
    <property type="match status" value="1"/>
</dbReference>
<dbReference type="SUPFAM" id="SSF54843">
    <property type="entry name" value="Ribosomal protein L22"/>
    <property type="match status" value="1"/>
</dbReference>